<reference key="1">
    <citation type="journal article" date="1994" name="Science">
        <title>Complete nucleotide sequence of Saccharomyces cerevisiae chromosome VIII.</title>
        <authorList>
            <person name="Johnston M."/>
            <person name="Andrews S."/>
            <person name="Brinkman R."/>
            <person name="Cooper J."/>
            <person name="Ding H."/>
            <person name="Dover J."/>
            <person name="Du Z."/>
            <person name="Favello A."/>
            <person name="Fulton L."/>
            <person name="Gattung S."/>
            <person name="Geisel C."/>
            <person name="Kirsten J."/>
            <person name="Kucaba T."/>
            <person name="Hillier L.W."/>
            <person name="Jier M."/>
            <person name="Johnston L."/>
            <person name="Langston Y."/>
            <person name="Latreille P."/>
            <person name="Louis E.J."/>
            <person name="Macri C."/>
            <person name="Mardis E."/>
            <person name="Menezes S."/>
            <person name="Mouser L."/>
            <person name="Nhan M."/>
            <person name="Rifkin L."/>
            <person name="Riles L."/>
            <person name="St Peter H."/>
            <person name="Trevaskis E."/>
            <person name="Vaughan K."/>
            <person name="Vignati D."/>
            <person name="Wilcox L."/>
            <person name="Wohldman P."/>
            <person name="Waterston R."/>
            <person name="Wilson R."/>
            <person name="Vaudin M."/>
        </authorList>
    </citation>
    <scope>NUCLEOTIDE SEQUENCE [LARGE SCALE GENOMIC DNA]</scope>
    <source>
        <strain>ATCC 204508 / S288c</strain>
    </source>
</reference>
<reference key="2">
    <citation type="journal article" date="2014" name="G3 (Bethesda)">
        <title>The reference genome sequence of Saccharomyces cerevisiae: Then and now.</title>
        <authorList>
            <person name="Engel S.R."/>
            <person name="Dietrich F.S."/>
            <person name="Fisk D.G."/>
            <person name="Binkley G."/>
            <person name="Balakrishnan R."/>
            <person name="Costanzo M.C."/>
            <person name="Dwight S.S."/>
            <person name="Hitz B.C."/>
            <person name="Karra K."/>
            <person name="Nash R.S."/>
            <person name="Weng S."/>
            <person name="Wong E.D."/>
            <person name="Lloyd P."/>
            <person name="Skrzypek M.S."/>
            <person name="Miyasato S.R."/>
            <person name="Simison M."/>
            <person name="Cherry J.M."/>
        </authorList>
    </citation>
    <scope>GENOME REANNOTATION</scope>
    <source>
        <strain>ATCC 204508 / S288c</strain>
    </source>
</reference>
<reference key="3">
    <citation type="journal article" date="2003" name="Mol. Cell">
        <title>Assigning function to yeast proteins by integration of technologies.</title>
        <authorList>
            <person name="Hazbun T.R."/>
            <person name="Malmstroem L."/>
            <person name="Anderson S."/>
            <person name="Graczyk B.J."/>
            <person name="Fox B."/>
            <person name="Riffle M."/>
            <person name="Sundin B.A."/>
            <person name="Aranda J.D."/>
            <person name="McDonald W.H."/>
            <person name="Chiu C.-H."/>
            <person name="Snydsman B.E."/>
            <person name="Bradley P."/>
            <person name="Muller E.G.D."/>
            <person name="Fields S."/>
            <person name="Baker D."/>
            <person name="Yates J.R. III"/>
            <person name="Davis T.N."/>
        </authorList>
    </citation>
    <scope>IDENTIFICATION IN THE RIX1 COMPLEX</scope>
    <scope>IDENTIFICATION BY MASS SPECTROMETRY</scope>
</reference>
<reference key="4">
    <citation type="journal article" date="2003" name="Nature">
        <title>Global analysis of protein localization in budding yeast.</title>
        <authorList>
            <person name="Huh W.-K."/>
            <person name="Falvo J.V."/>
            <person name="Gerke L.C."/>
            <person name="Carroll A.S."/>
            <person name="Howson R.W."/>
            <person name="Weissman J.S."/>
            <person name="O'Shea E.K."/>
        </authorList>
    </citation>
    <scope>SUBCELLULAR LOCATION [LARGE SCALE ANALYSIS]</scope>
</reference>
<reference key="5">
    <citation type="journal article" date="2003" name="Nature">
        <title>Global analysis of protein expression in yeast.</title>
        <authorList>
            <person name="Ghaemmaghami S."/>
            <person name="Huh W.-K."/>
            <person name="Bower K."/>
            <person name="Howson R.W."/>
            <person name="Belle A."/>
            <person name="Dephoure N."/>
            <person name="O'Shea E.K."/>
            <person name="Weissman J.S."/>
        </authorList>
    </citation>
    <scope>LEVEL OF PROTEIN EXPRESSION [LARGE SCALE ANALYSIS]</scope>
</reference>
<reference key="6">
    <citation type="journal article" date="2004" name="J. Biol. Chem.">
        <title>Rea1, a dynein-related nuclear AAA-ATPase, is involved in late rRNA processing and nuclear export of 60 S subunits.</title>
        <authorList>
            <person name="Galani K."/>
            <person name="Nissan T.A."/>
            <person name="Petfalski E."/>
            <person name="Tollervey D."/>
            <person name="Hurt E."/>
        </authorList>
    </citation>
    <scope>IDENTIFICATION IN THE RIX1 COMPLEX</scope>
    <scope>SUBCELLULAR LOCATION</scope>
    <scope>FUNCTION OF THE RIX1 COMPLEX</scope>
    <scope>IDENTIFICATION BY MASS SPECTROMETRY</scope>
</reference>
<reference key="7">
    <citation type="journal article" date="2004" name="Mol. Cell">
        <title>High-definition macromolecular composition of yeast RNA-processing complexes.</title>
        <authorList>
            <person name="Krogan N.J."/>
            <person name="Peng W.-T."/>
            <person name="Cagney G."/>
            <person name="Robinson M.D."/>
            <person name="Haw R."/>
            <person name="Zhong G."/>
            <person name="Guo X."/>
            <person name="Zhang X."/>
            <person name="Canadien V."/>
            <person name="Richards D.P."/>
            <person name="Beattie B.K."/>
            <person name="Lalev A."/>
            <person name="Zhang W."/>
            <person name="Davierwala A.P."/>
            <person name="Mnaimneh S."/>
            <person name="Starostine A."/>
            <person name="Tikuisis A.P."/>
            <person name="Grigull J."/>
            <person name="Datta N."/>
            <person name="Bray J.E."/>
            <person name="Hughes T.R."/>
            <person name="Emili A."/>
            <person name="Greenblatt J.F."/>
        </authorList>
    </citation>
    <scope>IDENTIFICATION IN THE RIX1 COMPLEX</scope>
    <scope>FUNCTION OF THE RIX1 COMPLEX</scope>
</reference>
<reference key="8">
    <citation type="journal article" date="2004" name="Mol. Cell">
        <title>A pre-ribosome with a tadpole-like structure functions in ATP-dependent maturation of 60S subunits.</title>
        <authorList>
            <person name="Nissan T.A."/>
            <person name="Galani K."/>
            <person name="Maco B."/>
            <person name="Tollervey D."/>
            <person name="Aebi U."/>
            <person name="Hurt E."/>
        </authorList>
    </citation>
    <scope>IDENTIFICATION IN THE RIX1 COMPLEX</scope>
    <scope>INTERACTION WITH MDN1 AND PRE-60S RIBOSOMAL PARTICLES</scope>
    <scope>IDENTIFICATION BY MASS SPECTROMETRY</scope>
</reference>
<reference key="9">
    <citation type="journal article" date="2016" name="Nat. Struct. Mol. Biol.">
        <title>Architecture of the Rix1-Rea1 checkpoint machinery during pre-60S-ribosome remodeling.</title>
        <authorList>
            <person name="Barrio-Garcia C."/>
            <person name="Thoms M."/>
            <person name="Flemming D."/>
            <person name="Kater L."/>
            <person name="Berninghausen O."/>
            <person name="Bassler J."/>
            <person name="Beckmann R."/>
            <person name="Hurt E."/>
        </authorList>
    </citation>
    <scope>IDENTIFICATION IN THE RIX1 COMPLEX</scope>
</reference>
<evidence type="ECO:0000256" key="1">
    <source>
        <dbReference type="SAM" id="MobiDB-lite"/>
    </source>
</evidence>
<evidence type="ECO:0000269" key="2">
    <source>
    </source>
</evidence>
<evidence type="ECO:0000269" key="3">
    <source>
    </source>
</evidence>
<evidence type="ECO:0000269" key="4">
    <source>
    </source>
</evidence>
<evidence type="ECO:0000269" key="5">
    <source>
    </source>
</evidence>
<evidence type="ECO:0000269" key="6">
    <source>
    </source>
</evidence>
<evidence type="ECO:0000269" key="7">
    <source>
    </source>
</evidence>
<evidence type="ECO:0000305" key="8"/>
<evidence type="ECO:0007829" key="9">
    <source>
        <dbReference type="PDB" id="6YLE"/>
    </source>
</evidence>
<proteinExistence type="evidence at protein level"/>
<accession>P38803</accession>
<accession>D3DL36</accession>
<keyword id="KW-0002">3D-structure</keyword>
<keyword id="KW-0539">Nucleus</keyword>
<keyword id="KW-1185">Reference proteome</keyword>
<keyword id="KW-0690">Ribosome biogenesis</keyword>
<keyword id="KW-0698">rRNA processing</keyword>
<name>IPI1_YEAST</name>
<organism>
    <name type="scientific">Saccharomyces cerevisiae (strain ATCC 204508 / S288c)</name>
    <name type="common">Baker's yeast</name>
    <dbReference type="NCBI Taxonomy" id="559292"/>
    <lineage>
        <taxon>Eukaryota</taxon>
        <taxon>Fungi</taxon>
        <taxon>Dikarya</taxon>
        <taxon>Ascomycota</taxon>
        <taxon>Saccharomycotina</taxon>
        <taxon>Saccharomycetes</taxon>
        <taxon>Saccharomycetales</taxon>
        <taxon>Saccharomycetaceae</taxon>
        <taxon>Saccharomyces</taxon>
    </lineage>
</organism>
<dbReference type="EMBL" id="U10556">
    <property type="protein sequence ID" value="AAB68883.1"/>
    <property type="molecule type" value="Genomic_DNA"/>
</dbReference>
<dbReference type="EMBL" id="BK006934">
    <property type="protein sequence ID" value="DAA06780.1"/>
    <property type="molecule type" value="Genomic_DNA"/>
</dbReference>
<dbReference type="PIR" id="S46805">
    <property type="entry name" value="S46805"/>
</dbReference>
<dbReference type="RefSeq" id="NP_011953.1">
    <property type="nucleotide sequence ID" value="NM_001179215.1"/>
</dbReference>
<dbReference type="PDB" id="6YLE">
    <property type="method" value="EM"/>
    <property type="resolution" value="3.30 A"/>
    <property type="chains" value="K=1-334"/>
</dbReference>
<dbReference type="PDB" id="6YLG">
    <property type="method" value="EM"/>
    <property type="resolution" value="3.00 A"/>
    <property type="chains" value="K=1-334"/>
</dbReference>
<dbReference type="PDB" id="6YLH">
    <property type="method" value="EM"/>
    <property type="resolution" value="3.10 A"/>
    <property type="chains" value="K=1-334"/>
</dbReference>
<dbReference type="PDBsum" id="6YLE"/>
<dbReference type="PDBsum" id="6YLG"/>
<dbReference type="PDBsum" id="6YLH"/>
<dbReference type="EMDB" id="EMD-10838"/>
<dbReference type="EMDB" id="EMD-10839"/>
<dbReference type="SMR" id="P38803"/>
<dbReference type="BioGRID" id="36520">
    <property type="interactions" value="266"/>
</dbReference>
<dbReference type="ComplexPortal" id="CPX-1711">
    <property type="entry name" value="RIX1 complex"/>
</dbReference>
<dbReference type="DIP" id="DIP-4665N"/>
<dbReference type="FunCoup" id="P38803">
    <property type="interactions" value="304"/>
</dbReference>
<dbReference type="IntAct" id="P38803">
    <property type="interactions" value="50"/>
</dbReference>
<dbReference type="MINT" id="P38803"/>
<dbReference type="STRING" id="4932.YHR085W"/>
<dbReference type="iPTMnet" id="P38803"/>
<dbReference type="PaxDb" id="4932-YHR085W"/>
<dbReference type="PeptideAtlas" id="P38803"/>
<dbReference type="EnsemblFungi" id="YHR085W_mRNA">
    <property type="protein sequence ID" value="YHR085W"/>
    <property type="gene ID" value="YHR085W"/>
</dbReference>
<dbReference type="GeneID" id="856485"/>
<dbReference type="KEGG" id="sce:YHR085W"/>
<dbReference type="AGR" id="SGD:S000001127"/>
<dbReference type="SGD" id="S000001127">
    <property type="gene designation" value="IPI1"/>
</dbReference>
<dbReference type="VEuPathDB" id="FungiDB:YHR085W"/>
<dbReference type="eggNOG" id="KOG2149">
    <property type="taxonomic scope" value="Eukaryota"/>
</dbReference>
<dbReference type="GeneTree" id="ENSGT00950000182992"/>
<dbReference type="HOGENOM" id="CLU_050252_2_0_1"/>
<dbReference type="InParanoid" id="P38803"/>
<dbReference type="OMA" id="CAGGWVK"/>
<dbReference type="OrthoDB" id="361362at2759"/>
<dbReference type="BioCyc" id="YEAST:G3O-31132-MONOMER"/>
<dbReference type="Reactome" id="R-SCE-6791226">
    <property type="pathway name" value="Major pathway of rRNA processing in the nucleolus and cytosol"/>
</dbReference>
<dbReference type="BioGRID-ORCS" id="856485">
    <property type="hits" value="0 hits in 10 CRISPR screens"/>
</dbReference>
<dbReference type="PRO" id="PR:P38803"/>
<dbReference type="Proteomes" id="UP000002311">
    <property type="component" value="Chromosome VIII"/>
</dbReference>
<dbReference type="RNAct" id="P38803">
    <property type="molecule type" value="protein"/>
</dbReference>
<dbReference type="GO" id="GO:0005829">
    <property type="term" value="C:cytosol"/>
    <property type="evidence" value="ECO:0000314"/>
    <property type="project" value="SGD"/>
</dbReference>
<dbReference type="GO" id="GO:0005654">
    <property type="term" value="C:nucleoplasm"/>
    <property type="evidence" value="ECO:0000314"/>
    <property type="project" value="SGD"/>
</dbReference>
<dbReference type="GO" id="GO:0005634">
    <property type="term" value="C:nucleus"/>
    <property type="evidence" value="ECO:0000314"/>
    <property type="project" value="SGD"/>
</dbReference>
<dbReference type="GO" id="GO:0120330">
    <property type="term" value="C:rixosome complex"/>
    <property type="evidence" value="ECO:0000314"/>
    <property type="project" value="SGD"/>
</dbReference>
<dbReference type="GO" id="GO:0003682">
    <property type="term" value="F:chromatin binding"/>
    <property type="evidence" value="ECO:0000314"/>
    <property type="project" value="SGD"/>
</dbReference>
<dbReference type="GO" id="GO:0000463">
    <property type="term" value="P:maturation of LSU-rRNA from tricistronic rRNA transcript (SSU-rRNA, 5.8S rRNA, LSU-rRNA)"/>
    <property type="evidence" value="ECO:0000315"/>
    <property type="project" value="SGD"/>
</dbReference>
<dbReference type="GO" id="GO:0006267">
    <property type="term" value="P:pre-replicative complex assembly involved in nuclear cell cycle DNA replication"/>
    <property type="evidence" value="ECO:0000315"/>
    <property type="project" value="SGD"/>
</dbReference>
<dbReference type="GO" id="GO:0030174">
    <property type="term" value="P:regulation of DNA-templated DNA replication initiation"/>
    <property type="evidence" value="ECO:0000315"/>
    <property type="project" value="SGD"/>
</dbReference>
<dbReference type="GO" id="GO:0000027">
    <property type="term" value="P:ribosomal large subunit assembly"/>
    <property type="evidence" value="ECO:0000315"/>
    <property type="project" value="SGD"/>
</dbReference>
<dbReference type="GO" id="GO:0006364">
    <property type="term" value="P:rRNA processing"/>
    <property type="evidence" value="ECO:0000315"/>
    <property type="project" value="SGD"/>
</dbReference>
<dbReference type="Gene3D" id="1.25.10.10">
    <property type="entry name" value="Leucine-rich Repeat Variant"/>
    <property type="match status" value="1"/>
</dbReference>
<dbReference type="InterPro" id="IPR011989">
    <property type="entry name" value="ARM-like"/>
</dbReference>
<dbReference type="InterPro" id="IPR016024">
    <property type="entry name" value="ARM-type_fold"/>
</dbReference>
<dbReference type="InterPro" id="IPR024679">
    <property type="entry name" value="Ipi1_N"/>
</dbReference>
<dbReference type="PANTHER" id="PTHR16056">
    <property type="entry name" value="REGULATOR OF MICROTUBULE DYNAMICS PROTEIN"/>
    <property type="match status" value="1"/>
</dbReference>
<dbReference type="PANTHER" id="PTHR16056:SF2">
    <property type="entry name" value="TESTIS-EXPRESSED PROTEIN 10"/>
    <property type="match status" value="1"/>
</dbReference>
<dbReference type="Pfam" id="PF12333">
    <property type="entry name" value="Ipi1_N"/>
    <property type="match status" value="1"/>
</dbReference>
<dbReference type="SUPFAM" id="SSF48371">
    <property type="entry name" value="ARM repeat"/>
    <property type="match status" value="1"/>
</dbReference>
<feature type="chain" id="PRO_0000202904" description="Pre-rRNA-processing protein IPI1">
    <location>
        <begin position="1"/>
        <end position="334"/>
    </location>
</feature>
<feature type="region of interest" description="Disordered" evidence="1">
    <location>
        <begin position="1"/>
        <end position="32"/>
    </location>
</feature>
<feature type="strand" evidence="9">
    <location>
        <begin position="252"/>
        <end position="254"/>
    </location>
</feature>
<sequence>MTKSRKQKQKKQDFLRKKLKVGKPKEKARNATDTSFVSKTISIRNQHLDQNPHDLTKRLTLLKHHNINVRKETLTTFQKSIPSIIKSRLMTPLLTQSIPLICDESQQVRQGLIDLVDEIGSHDAEILKLHCNIFVLYINMAMTHIVTQIQADSTKFLSHLLKYCGDEVVRKSWVKLLNGVFGVLGWGQVGKNDSASIVQTKKRNAKYVTIHLNALYTLVEYGCQDERARSDGDTAETTEDSGTLRNPYLIPDYPQPFEHLKLFTRELKVQDATSSGVNATLLSLATQDIDTRKAVFIEQFLPIVRKKIEVIIKEGGECGKSANKLKTLLAKIFD</sequence>
<protein>
    <recommendedName>
        <fullName>Pre-rRNA-processing protein IPI1</fullName>
    </recommendedName>
    <alternativeName>
        <fullName>Involved in processing IST2 protein 1</fullName>
    </alternativeName>
</protein>
<comment type="function">
    <text evidence="5 7">Component of the RIX1 complex required for processing of ITS2 sequences from 35S pre-rRNA.</text>
</comment>
<comment type="subunit">
    <text evidence="4 5 6 7">Component of the RIX1 complex, composed of IPI1, RIX1/IPI2 and IPI3 in a 1:2:2 stoichiometry. The complex interacts (via RIX1) with MDN1 (via its hexameric AAA ATPase ring) and the pre-60S ribosome particles.</text>
</comment>
<comment type="subcellular location">
    <subcellularLocation>
        <location evidence="2 7">Nucleus</location>
    </subcellularLocation>
</comment>
<comment type="miscellaneous">
    <text evidence="3">Present with 4420 molecules/cell in log phase SD medium.</text>
</comment>
<comment type="similarity">
    <text evidence="8">Belongs to the IPI1/TEX10 family.</text>
</comment>
<gene>
    <name type="primary">IPI1</name>
    <name type="ordered locus">YHR085W</name>
</gene>